<keyword id="KW-0004">4Fe-4S</keyword>
<keyword id="KW-0963">Cytoplasm</keyword>
<keyword id="KW-0408">Iron</keyword>
<keyword id="KW-0411">Iron-sulfur</keyword>
<keyword id="KW-0479">Metal-binding</keyword>
<keyword id="KW-0949">S-adenosyl-L-methionine</keyword>
<keyword id="KW-0808">Transferase</keyword>
<keyword id="KW-0819">tRNA processing</keyword>
<dbReference type="EC" id="2.8.4.3" evidence="1"/>
<dbReference type="EMBL" id="CP000107">
    <property type="protein sequence ID" value="AAZ68299.1"/>
    <property type="molecule type" value="Genomic_DNA"/>
</dbReference>
<dbReference type="RefSeq" id="WP_011304377.1">
    <property type="nucleotide sequence ID" value="NC_007354.1"/>
</dbReference>
<dbReference type="SMR" id="Q3YSK6"/>
<dbReference type="FunCoup" id="Q3YSK6">
    <property type="interactions" value="320"/>
</dbReference>
<dbReference type="STRING" id="269484.Ecaj_0252"/>
<dbReference type="KEGG" id="ecn:Ecaj_0252"/>
<dbReference type="eggNOG" id="COG0621">
    <property type="taxonomic scope" value="Bacteria"/>
</dbReference>
<dbReference type="HOGENOM" id="CLU_018697_2_0_5"/>
<dbReference type="InParanoid" id="Q3YSK6"/>
<dbReference type="Proteomes" id="UP000000435">
    <property type="component" value="Chromosome"/>
</dbReference>
<dbReference type="GO" id="GO:0005829">
    <property type="term" value="C:cytosol"/>
    <property type="evidence" value="ECO:0007669"/>
    <property type="project" value="TreeGrafter"/>
</dbReference>
<dbReference type="GO" id="GO:0051539">
    <property type="term" value="F:4 iron, 4 sulfur cluster binding"/>
    <property type="evidence" value="ECO:0007669"/>
    <property type="project" value="UniProtKB-UniRule"/>
</dbReference>
<dbReference type="GO" id="GO:0046872">
    <property type="term" value="F:metal ion binding"/>
    <property type="evidence" value="ECO:0007669"/>
    <property type="project" value="UniProtKB-KW"/>
</dbReference>
<dbReference type="GO" id="GO:0035597">
    <property type="term" value="F:N6-isopentenyladenosine methylthiotransferase activity"/>
    <property type="evidence" value="ECO:0007669"/>
    <property type="project" value="TreeGrafter"/>
</dbReference>
<dbReference type="CDD" id="cd01335">
    <property type="entry name" value="Radical_SAM"/>
    <property type="match status" value="1"/>
</dbReference>
<dbReference type="FunFam" id="3.40.50.12160:FF:000003">
    <property type="entry name" value="CDK5 regulatory subunit-associated protein 1"/>
    <property type="match status" value="1"/>
</dbReference>
<dbReference type="FunFam" id="3.80.30.20:FF:000001">
    <property type="entry name" value="tRNA-2-methylthio-N(6)-dimethylallyladenosine synthase 2"/>
    <property type="match status" value="1"/>
</dbReference>
<dbReference type="Gene3D" id="3.40.50.12160">
    <property type="entry name" value="Methylthiotransferase, N-terminal domain"/>
    <property type="match status" value="1"/>
</dbReference>
<dbReference type="Gene3D" id="3.80.30.20">
    <property type="entry name" value="tm_1862 like domain"/>
    <property type="match status" value="1"/>
</dbReference>
<dbReference type="HAMAP" id="MF_01864">
    <property type="entry name" value="tRNA_metthiotr_MiaB"/>
    <property type="match status" value="1"/>
</dbReference>
<dbReference type="InterPro" id="IPR006638">
    <property type="entry name" value="Elp3/MiaA/NifB-like_rSAM"/>
</dbReference>
<dbReference type="InterPro" id="IPR005839">
    <property type="entry name" value="Methylthiotransferase"/>
</dbReference>
<dbReference type="InterPro" id="IPR020612">
    <property type="entry name" value="Methylthiotransferase_CS"/>
</dbReference>
<dbReference type="InterPro" id="IPR013848">
    <property type="entry name" value="Methylthiotransferase_N"/>
</dbReference>
<dbReference type="InterPro" id="IPR038135">
    <property type="entry name" value="Methylthiotransferase_N_sf"/>
</dbReference>
<dbReference type="InterPro" id="IPR006463">
    <property type="entry name" value="MiaB_methiolase"/>
</dbReference>
<dbReference type="InterPro" id="IPR007197">
    <property type="entry name" value="rSAM"/>
</dbReference>
<dbReference type="InterPro" id="IPR023404">
    <property type="entry name" value="rSAM_horseshoe"/>
</dbReference>
<dbReference type="NCBIfam" id="TIGR01574">
    <property type="entry name" value="miaB-methiolase"/>
    <property type="match status" value="1"/>
</dbReference>
<dbReference type="NCBIfam" id="TIGR00089">
    <property type="entry name" value="MiaB/RimO family radical SAM methylthiotransferase"/>
    <property type="match status" value="1"/>
</dbReference>
<dbReference type="PANTHER" id="PTHR43020">
    <property type="entry name" value="CDK5 REGULATORY SUBUNIT-ASSOCIATED PROTEIN 1"/>
    <property type="match status" value="1"/>
</dbReference>
<dbReference type="PANTHER" id="PTHR43020:SF2">
    <property type="entry name" value="MITOCHONDRIAL TRNA METHYLTHIOTRANSFERASE CDK5RAP1"/>
    <property type="match status" value="1"/>
</dbReference>
<dbReference type="Pfam" id="PF04055">
    <property type="entry name" value="Radical_SAM"/>
    <property type="match status" value="1"/>
</dbReference>
<dbReference type="Pfam" id="PF00919">
    <property type="entry name" value="UPF0004"/>
    <property type="match status" value="1"/>
</dbReference>
<dbReference type="SFLD" id="SFLDF00273">
    <property type="entry name" value="(dimethylallyl)adenosine_tRNA"/>
    <property type="match status" value="1"/>
</dbReference>
<dbReference type="SFLD" id="SFLDG01082">
    <property type="entry name" value="B12-binding_domain_containing"/>
    <property type="match status" value="1"/>
</dbReference>
<dbReference type="SFLD" id="SFLDS00029">
    <property type="entry name" value="Radical_SAM"/>
    <property type="match status" value="1"/>
</dbReference>
<dbReference type="SMART" id="SM00729">
    <property type="entry name" value="Elp3"/>
    <property type="match status" value="1"/>
</dbReference>
<dbReference type="SUPFAM" id="SSF102114">
    <property type="entry name" value="Radical SAM enzymes"/>
    <property type="match status" value="1"/>
</dbReference>
<dbReference type="PROSITE" id="PS51449">
    <property type="entry name" value="MTTASE_N"/>
    <property type="match status" value="1"/>
</dbReference>
<dbReference type="PROSITE" id="PS01278">
    <property type="entry name" value="MTTASE_RADICAL"/>
    <property type="match status" value="1"/>
</dbReference>
<dbReference type="PROSITE" id="PS51918">
    <property type="entry name" value="RADICAL_SAM"/>
    <property type="match status" value="1"/>
</dbReference>
<comment type="function">
    <text evidence="1">Catalyzes the methylthiolation of N6-(dimethylallyl)adenosine (i(6)A), leading to the formation of 2-methylthio-N6-(dimethylallyl)adenosine (ms(2)i(6)A) at position 37 in tRNAs that read codons beginning with uridine.</text>
</comment>
<comment type="catalytic activity">
    <reaction evidence="1">
        <text>N(6)-dimethylallyladenosine(37) in tRNA + (sulfur carrier)-SH + AH2 + 2 S-adenosyl-L-methionine = 2-methylsulfanyl-N(6)-dimethylallyladenosine(37) in tRNA + (sulfur carrier)-H + 5'-deoxyadenosine + L-methionine + A + S-adenosyl-L-homocysteine + 2 H(+)</text>
        <dbReference type="Rhea" id="RHEA:37067"/>
        <dbReference type="Rhea" id="RHEA-COMP:10375"/>
        <dbReference type="Rhea" id="RHEA-COMP:10376"/>
        <dbReference type="Rhea" id="RHEA-COMP:14737"/>
        <dbReference type="Rhea" id="RHEA-COMP:14739"/>
        <dbReference type="ChEBI" id="CHEBI:13193"/>
        <dbReference type="ChEBI" id="CHEBI:15378"/>
        <dbReference type="ChEBI" id="CHEBI:17319"/>
        <dbReference type="ChEBI" id="CHEBI:17499"/>
        <dbReference type="ChEBI" id="CHEBI:29917"/>
        <dbReference type="ChEBI" id="CHEBI:57844"/>
        <dbReference type="ChEBI" id="CHEBI:57856"/>
        <dbReference type="ChEBI" id="CHEBI:59789"/>
        <dbReference type="ChEBI" id="CHEBI:64428"/>
        <dbReference type="ChEBI" id="CHEBI:74415"/>
        <dbReference type="ChEBI" id="CHEBI:74417"/>
        <dbReference type="EC" id="2.8.4.3"/>
    </reaction>
</comment>
<comment type="cofactor">
    <cofactor evidence="1">
        <name>[4Fe-4S] cluster</name>
        <dbReference type="ChEBI" id="CHEBI:49883"/>
    </cofactor>
    <text evidence="1">Binds 2 [4Fe-4S] clusters. One cluster is coordinated with 3 cysteines and an exchangeable S-adenosyl-L-methionine.</text>
</comment>
<comment type="subunit">
    <text evidence="1">Monomer.</text>
</comment>
<comment type="subcellular location">
    <subcellularLocation>
        <location evidence="1">Cytoplasm</location>
    </subcellularLocation>
</comment>
<comment type="similarity">
    <text evidence="1">Belongs to the methylthiotransferase family. MiaB subfamily.</text>
</comment>
<reference key="1">
    <citation type="journal article" date="2006" name="J. Bacteriol.">
        <title>The genome of the obligately intracellular bacterium Ehrlichia canis reveals themes of complex membrane structure and immune evasion strategies.</title>
        <authorList>
            <person name="Mavromatis K."/>
            <person name="Doyle C.K."/>
            <person name="Lykidis A."/>
            <person name="Ivanova N."/>
            <person name="Francino M.P."/>
            <person name="Chain P."/>
            <person name="Shin M."/>
            <person name="Malfatti S."/>
            <person name="Larimer F."/>
            <person name="Copeland A."/>
            <person name="Detter J.C."/>
            <person name="Land M."/>
            <person name="Richardson P.M."/>
            <person name="Yu X.J."/>
            <person name="Walker D.H."/>
            <person name="McBride J.W."/>
            <person name="Kyrpides N.C."/>
        </authorList>
    </citation>
    <scope>NUCLEOTIDE SEQUENCE [LARGE SCALE GENOMIC DNA]</scope>
    <source>
        <strain>Jake</strain>
    </source>
</reference>
<sequence length="441" mass="50164">MKGLYIKSYGCQMNVYDSLIMENIIKPLGFTVVSEPSEADVVILNTCHIREKASEKLYSELGKIRKIQENKDLTIVVAGCVAQAEGEEIFERSPFVDIVVGPQSIHTLPELLVKAHRIKKQVINIDFPVISKFDAIPVEEYTKNQETSAFISVQEGCNKFCTFCVVPYTRGEEYSRTVEAIFNEALVLADSGIKEITLIGQNVNAYHGTYKGCEWDLGKLIQHIAKIPNIERIRYTTSHPRDMHQSLYEAHKLEEKLMPFVHLPVQSGSDRILKKMNRKHTAEEYIDIISHLRKQRPDIAFSSDFIVGFPGETEEDFENTIKLVEKVKFSQAYSFKYSPRPGTPGAEYPNQVPEEIKSERLLRLQKLLREQQLAFNRSMIGETCTVLFSSKKGKFDNQIIGKTAYMQSCYINTDNPSQFYNSISPIKIIDAHQNSLTGVVC</sequence>
<feature type="chain" id="PRO_0000374272" description="tRNA-2-methylthio-N(6)-dimethylallyladenosine synthase">
    <location>
        <begin position="1"/>
        <end position="441"/>
    </location>
</feature>
<feature type="domain" description="MTTase N-terminal" evidence="1">
    <location>
        <begin position="2"/>
        <end position="117"/>
    </location>
</feature>
<feature type="domain" description="Radical SAM core" evidence="2">
    <location>
        <begin position="143"/>
        <end position="374"/>
    </location>
</feature>
<feature type="binding site" evidence="1">
    <location>
        <position position="11"/>
    </location>
    <ligand>
        <name>[4Fe-4S] cluster</name>
        <dbReference type="ChEBI" id="CHEBI:49883"/>
        <label>1</label>
    </ligand>
</feature>
<feature type="binding site" evidence="1">
    <location>
        <position position="47"/>
    </location>
    <ligand>
        <name>[4Fe-4S] cluster</name>
        <dbReference type="ChEBI" id="CHEBI:49883"/>
        <label>1</label>
    </ligand>
</feature>
<feature type="binding site" evidence="1">
    <location>
        <position position="80"/>
    </location>
    <ligand>
        <name>[4Fe-4S] cluster</name>
        <dbReference type="ChEBI" id="CHEBI:49883"/>
        <label>1</label>
    </ligand>
</feature>
<feature type="binding site" evidence="1">
    <location>
        <position position="157"/>
    </location>
    <ligand>
        <name>[4Fe-4S] cluster</name>
        <dbReference type="ChEBI" id="CHEBI:49883"/>
        <label>2</label>
        <note>4Fe-4S-S-AdoMet</note>
    </ligand>
</feature>
<feature type="binding site" evidence="1">
    <location>
        <position position="161"/>
    </location>
    <ligand>
        <name>[4Fe-4S] cluster</name>
        <dbReference type="ChEBI" id="CHEBI:49883"/>
        <label>2</label>
        <note>4Fe-4S-S-AdoMet</note>
    </ligand>
</feature>
<feature type="binding site" evidence="1">
    <location>
        <position position="164"/>
    </location>
    <ligand>
        <name>[4Fe-4S] cluster</name>
        <dbReference type="ChEBI" id="CHEBI:49883"/>
        <label>2</label>
        <note>4Fe-4S-S-AdoMet</note>
    </ligand>
</feature>
<evidence type="ECO:0000255" key="1">
    <source>
        <dbReference type="HAMAP-Rule" id="MF_01864"/>
    </source>
</evidence>
<evidence type="ECO:0000255" key="2">
    <source>
        <dbReference type="PROSITE-ProRule" id="PRU01266"/>
    </source>
</evidence>
<protein>
    <recommendedName>
        <fullName evidence="1">tRNA-2-methylthio-N(6)-dimethylallyladenosine synthase</fullName>
        <ecNumber evidence="1">2.8.4.3</ecNumber>
    </recommendedName>
    <alternativeName>
        <fullName evidence="1">(Dimethylallyl)adenosine tRNA methylthiotransferase MiaB</fullName>
    </alternativeName>
    <alternativeName>
        <fullName evidence="1">tRNA-i(6)A37 methylthiotransferase</fullName>
    </alternativeName>
</protein>
<proteinExistence type="inferred from homology"/>
<organism>
    <name type="scientific">Ehrlichia canis (strain Jake)</name>
    <dbReference type="NCBI Taxonomy" id="269484"/>
    <lineage>
        <taxon>Bacteria</taxon>
        <taxon>Pseudomonadati</taxon>
        <taxon>Pseudomonadota</taxon>
        <taxon>Alphaproteobacteria</taxon>
        <taxon>Rickettsiales</taxon>
        <taxon>Anaplasmataceae</taxon>
        <taxon>Ehrlichia</taxon>
    </lineage>
</organism>
<name>MIAB_EHRCJ</name>
<gene>
    <name evidence="1" type="primary">miaB</name>
    <name type="ordered locus">Ecaj_0252</name>
</gene>
<accession>Q3YSK6</accession>